<feature type="chain" id="PRO_1000101279" description="Glycine--tRNA ligase beta subunit">
    <location>
        <begin position="1"/>
        <end position="689"/>
    </location>
</feature>
<protein>
    <recommendedName>
        <fullName evidence="1">Glycine--tRNA ligase beta subunit</fullName>
        <ecNumber evidence="1">6.1.1.14</ecNumber>
    </recommendedName>
    <alternativeName>
        <fullName evidence="1">Glycyl-tRNA synthetase beta subunit</fullName>
        <shortName evidence="1">GlyRS</shortName>
    </alternativeName>
</protein>
<dbReference type="EC" id="6.1.1.14" evidence="1"/>
<dbReference type="EMBL" id="AP009240">
    <property type="protein sequence ID" value="BAG79356.1"/>
    <property type="molecule type" value="Genomic_DNA"/>
</dbReference>
<dbReference type="RefSeq" id="WP_001291774.1">
    <property type="nucleotide sequence ID" value="NC_011415.1"/>
</dbReference>
<dbReference type="SMR" id="B6I3C9"/>
<dbReference type="KEGG" id="ecy:ECSE_3832"/>
<dbReference type="HOGENOM" id="CLU_007220_2_2_6"/>
<dbReference type="Proteomes" id="UP000008199">
    <property type="component" value="Chromosome"/>
</dbReference>
<dbReference type="GO" id="GO:0005829">
    <property type="term" value="C:cytosol"/>
    <property type="evidence" value="ECO:0007669"/>
    <property type="project" value="TreeGrafter"/>
</dbReference>
<dbReference type="GO" id="GO:0004814">
    <property type="term" value="F:arginine-tRNA ligase activity"/>
    <property type="evidence" value="ECO:0007669"/>
    <property type="project" value="InterPro"/>
</dbReference>
<dbReference type="GO" id="GO:0005524">
    <property type="term" value="F:ATP binding"/>
    <property type="evidence" value="ECO:0007669"/>
    <property type="project" value="UniProtKB-UniRule"/>
</dbReference>
<dbReference type="GO" id="GO:0004820">
    <property type="term" value="F:glycine-tRNA ligase activity"/>
    <property type="evidence" value="ECO:0007669"/>
    <property type="project" value="UniProtKB-UniRule"/>
</dbReference>
<dbReference type="GO" id="GO:0006420">
    <property type="term" value="P:arginyl-tRNA aminoacylation"/>
    <property type="evidence" value="ECO:0007669"/>
    <property type="project" value="InterPro"/>
</dbReference>
<dbReference type="GO" id="GO:0006426">
    <property type="term" value="P:glycyl-tRNA aminoacylation"/>
    <property type="evidence" value="ECO:0007669"/>
    <property type="project" value="UniProtKB-UniRule"/>
</dbReference>
<dbReference type="HAMAP" id="MF_00255">
    <property type="entry name" value="Gly_tRNA_synth_beta"/>
    <property type="match status" value="1"/>
</dbReference>
<dbReference type="InterPro" id="IPR008909">
    <property type="entry name" value="DALR_anticod-bd"/>
</dbReference>
<dbReference type="InterPro" id="IPR015944">
    <property type="entry name" value="Gly-tRNA-synth_bsu"/>
</dbReference>
<dbReference type="InterPro" id="IPR006194">
    <property type="entry name" value="Gly-tRNA-synth_heterodimer"/>
</dbReference>
<dbReference type="NCBIfam" id="TIGR00211">
    <property type="entry name" value="glyS"/>
    <property type="match status" value="1"/>
</dbReference>
<dbReference type="PANTHER" id="PTHR30075:SF2">
    <property type="entry name" value="GLYCINE--TRNA LIGASE, CHLOROPLASTIC_MITOCHONDRIAL 2"/>
    <property type="match status" value="1"/>
</dbReference>
<dbReference type="PANTHER" id="PTHR30075">
    <property type="entry name" value="GLYCYL-TRNA SYNTHETASE"/>
    <property type="match status" value="1"/>
</dbReference>
<dbReference type="Pfam" id="PF05746">
    <property type="entry name" value="DALR_1"/>
    <property type="match status" value="1"/>
</dbReference>
<dbReference type="Pfam" id="PF02092">
    <property type="entry name" value="tRNA_synt_2f"/>
    <property type="match status" value="1"/>
</dbReference>
<dbReference type="PRINTS" id="PR01045">
    <property type="entry name" value="TRNASYNTHGB"/>
</dbReference>
<dbReference type="SUPFAM" id="SSF109604">
    <property type="entry name" value="HD-domain/PDEase-like"/>
    <property type="match status" value="1"/>
</dbReference>
<dbReference type="PROSITE" id="PS50861">
    <property type="entry name" value="AA_TRNA_LIGASE_II_GLYAB"/>
    <property type="match status" value="1"/>
</dbReference>
<sequence length="689" mass="76797">MSEKTFLVEIGTEELPPKALRSLAESFAANFTAELDNAGLAHGTVQWFAAPRRLALKVANLAEAQPDREIEKRGPAIAQAFDAEGKPSKAAEGWARGCGITVDQAERLTTDKGEWLLYRAHVKGESTEALLPNMVATSLAKLPIPKLMRWGASDVHFVRPVHTVTLLLGDKVIPATILGIQSDRVIRGHRFMGEPEFTIDNADQYPEILRERGKVIADYEERKAKIKADAEEAARKIGGNADLSESLLEEVASLVEWPVVLTAKFEEKFLAVPAEALVYTMKGDQKYFPVYANDGKLLPNFIFVANIESKDPQQIISGNEKVVRPRLADAEFFFNTDRKKRLEDNLPRLQTVLFQQQLGTLRDKTDRIQALAGWIAEQIGADVNHATRAGLLSKCDLMTNMVFEFTDTQGVMGMHYARHDGEAEDVAVALNEQYQPRFAGDDLPSNPVACALAIADKMDTLAGIFGIGQHPKGDKDPFALRRAALGVLRIIVEKNLNLDLQTLTEEAVRLYGDKLTNANVVDDVIDFMLGRFRAWYQDEGYTVDTIQAVLARRPTRPADFDARMKAVSHFRTLEAAAALAAANKRVSNILAKSDEVLSDRVNASTLKEPEEIKLAMQVVVLRDKLEPYFAEGRYQDALVELAELREPVDAFFDKVMVMVDDKELRLNRLTMLEKLRELFLRVADISLLQ</sequence>
<accession>B6I3C9</accession>
<name>SYGB_ECOSE</name>
<evidence type="ECO:0000255" key="1">
    <source>
        <dbReference type="HAMAP-Rule" id="MF_00255"/>
    </source>
</evidence>
<keyword id="KW-0030">Aminoacyl-tRNA synthetase</keyword>
<keyword id="KW-0067">ATP-binding</keyword>
<keyword id="KW-0963">Cytoplasm</keyword>
<keyword id="KW-0436">Ligase</keyword>
<keyword id="KW-0547">Nucleotide-binding</keyword>
<keyword id="KW-0648">Protein biosynthesis</keyword>
<gene>
    <name evidence="1" type="primary">glyS</name>
    <name type="ordered locus">ECSE_3832</name>
</gene>
<proteinExistence type="inferred from homology"/>
<organism>
    <name type="scientific">Escherichia coli (strain SE11)</name>
    <dbReference type="NCBI Taxonomy" id="409438"/>
    <lineage>
        <taxon>Bacteria</taxon>
        <taxon>Pseudomonadati</taxon>
        <taxon>Pseudomonadota</taxon>
        <taxon>Gammaproteobacteria</taxon>
        <taxon>Enterobacterales</taxon>
        <taxon>Enterobacteriaceae</taxon>
        <taxon>Escherichia</taxon>
    </lineage>
</organism>
<reference key="1">
    <citation type="journal article" date="2008" name="DNA Res.">
        <title>Complete genome sequence and comparative analysis of the wild-type commensal Escherichia coli strain SE11 isolated from a healthy adult.</title>
        <authorList>
            <person name="Oshima K."/>
            <person name="Toh H."/>
            <person name="Ogura Y."/>
            <person name="Sasamoto H."/>
            <person name="Morita H."/>
            <person name="Park S.-H."/>
            <person name="Ooka T."/>
            <person name="Iyoda S."/>
            <person name="Taylor T.D."/>
            <person name="Hayashi T."/>
            <person name="Itoh K."/>
            <person name="Hattori M."/>
        </authorList>
    </citation>
    <scope>NUCLEOTIDE SEQUENCE [LARGE SCALE GENOMIC DNA]</scope>
    <source>
        <strain>SE11</strain>
    </source>
</reference>
<comment type="catalytic activity">
    <reaction evidence="1">
        <text>tRNA(Gly) + glycine + ATP = glycyl-tRNA(Gly) + AMP + diphosphate</text>
        <dbReference type="Rhea" id="RHEA:16013"/>
        <dbReference type="Rhea" id="RHEA-COMP:9664"/>
        <dbReference type="Rhea" id="RHEA-COMP:9683"/>
        <dbReference type="ChEBI" id="CHEBI:30616"/>
        <dbReference type="ChEBI" id="CHEBI:33019"/>
        <dbReference type="ChEBI" id="CHEBI:57305"/>
        <dbReference type="ChEBI" id="CHEBI:78442"/>
        <dbReference type="ChEBI" id="CHEBI:78522"/>
        <dbReference type="ChEBI" id="CHEBI:456215"/>
        <dbReference type="EC" id="6.1.1.14"/>
    </reaction>
</comment>
<comment type="subunit">
    <text evidence="1">Tetramer of two alpha and two beta subunits.</text>
</comment>
<comment type="subcellular location">
    <subcellularLocation>
        <location evidence="1">Cytoplasm</location>
    </subcellularLocation>
</comment>
<comment type="similarity">
    <text evidence="1">Belongs to the class-II aminoacyl-tRNA synthetase family.</text>
</comment>